<accession>C3LT16</accession>
<comment type="function">
    <text evidence="1">GTPase that plays an essential role in the late steps of ribosome biogenesis.</text>
</comment>
<comment type="subunit">
    <text evidence="1">Associates with the 50S ribosomal subunit.</text>
</comment>
<comment type="similarity">
    <text evidence="1">Belongs to the TRAFAC class TrmE-Era-EngA-EngB-Septin-like GTPase superfamily. EngA (Der) GTPase family.</text>
</comment>
<proteinExistence type="inferred from homology"/>
<organism>
    <name type="scientific">Vibrio cholerae serotype O1 (strain M66-2)</name>
    <dbReference type="NCBI Taxonomy" id="579112"/>
    <lineage>
        <taxon>Bacteria</taxon>
        <taxon>Pseudomonadati</taxon>
        <taxon>Pseudomonadota</taxon>
        <taxon>Gammaproteobacteria</taxon>
        <taxon>Vibrionales</taxon>
        <taxon>Vibrionaceae</taxon>
        <taxon>Vibrio</taxon>
    </lineage>
</organism>
<keyword id="KW-0342">GTP-binding</keyword>
<keyword id="KW-0547">Nucleotide-binding</keyword>
<keyword id="KW-0677">Repeat</keyword>
<keyword id="KW-0690">Ribosome biogenesis</keyword>
<sequence length="494" mass="55638">MVPVVALVGRPNVGKSTLFNRLTRTRDALVADFPGLTRDRKYGQAKLGEHEFIVIDTGGIDGSEEGVETKMAQQSLAAIDEADVVLFMVDGRAGLTVADEAIAQHLRRIEKPAILVVNKVDGIDADAASAEFWQLGMDQMYQIAAAHGRGVGALIDRVLNPFAEQMESEQAQLEDLTNEEDPEEEQLEYSEEEAEAEYKRLQDLPIKLAIIGRPNVGKSTLTNRILGEERVVVYDMPGTTRDSIYIPMKRDEREYVLIDTAGVRRRKRINETVEKFSVVKTLQAIEDANVVLLVVDARENISDQDLSLLGFALNSGRSIVIAVNKWDGLSFDVKEHVKKELDRRLGFVDFARIHFISALHGTGVGHLFESVQEAYRSATTRVGTSVLTRIMKMATDDHQPPMVRGRRVKLKYAHAGGYNPPIIVIHGNQVNELPDSYKRYLMNYYRKSLEIMGTPIRIQFQNSENPFEGKTNKMTLSQERQRKRLMSMVKNRRK</sequence>
<protein>
    <recommendedName>
        <fullName evidence="1">GTPase Der</fullName>
    </recommendedName>
    <alternativeName>
        <fullName evidence="1">GTP-binding protein EngA</fullName>
    </alternativeName>
</protein>
<dbReference type="EMBL" id="CP001233">
    <property type="protein sequence ID" value="ACP05042.1"/>
    <property type="molecule type" value="Genomic_DNA"/>
</dbReference>
<dbReference type="RefSeq" id="WP_000249403.1">
    <property type="nucleotide sequence ID" value="NC_012578.1"/>
</dbReference>
<dbReference type="SMR" id="C3LT16"/>
<dbReference type="KEGG" id="vcm:VCM66_0721"/>
<dbReference type="HOGENOM" id="CLU_016077_5_1_6"/>
<dbReference type="Proteomes" id="UP000001217">
    <property type="component" value="Chromosome I"/>
</dbReference>
<dbReference type="GO" id="GO:0016887">
    <property type="term" value="F:ATP hydrolysis activity"/>
    <property type="evidence" value="ECO:0007669"/>
    <property type="project" value="InterPro"/>
</dbReference>
<dbReference type="GO" id="GO:0005525">
    <property type="term" value="F:GTP binding"/>
    <property type="evidence" value="ECO:0007669"/>
    <property type="project" value="UniProtKB-UniRule"/>
</dbReference>
<dbReference type="GO" id="GO:0043022">
    <property type="term" value="F:ribosome binding"/>
    <property type="evidence" value="ECO:0007669"/>
    <property type="project" value="TreeGrafter"/>
</dbReference>
<dbReference type="GO" id="GO:0042254">
    <property type="term" value="P:ribosome biogenesis"/>
    <property type="evidence" value="ECO:0007669"/>
    <property type="project" value="UniProtKB-KW"/>
</dbReference>
<dbReference type="CDD" id="cd01894">
    <property type="entry name" value="EngA1"/>
    <property type="match status" value="1"/>
</dbReference>
<dbReference type="CDD" id="cd01895">
    <property type="entry name" value="EngA2"/>
    <property type="match status" value="1"/>
</dbReference>
<dbReference type="FunFam" id="3.30.300.20:FF:000004">
    <property type="entry name" value="GTPase Der"/>
    <property type="match status" value="1"/>
</dbReference>
<dbReference type="FunFam" id="3.40.50.300:FF:000040">
    <property type="entry name" value="GTPase Der"/>
    <property type="match status" value="1"/>
</dbReference>
<dbReference type="FunFam" id="3.40.50.300:FF:000057">
    <property type="entry name" value="GTPase Der"/>
    <property type="match status" value="1"/>
</dbReference>
<dbReference type="Gene3D" id="3.30.300.20">
    <property type="match status" value="1"/>
</dbReference>
<dbReference type="Gene3D" id="3.40.50.300">
    <property type="entry name" value="P-loop containing nucleotide triphosphate hydrolases"/>
    <property type="match status" value="2"/>
</dbReference>
<dbReference type="HAMAP" id="MF_00195">
    <property type="entry name" value="GTPase_Der"/>
    <property type="match status" value="1"/>
</dbReference>
<dbReference type="InterPro" id="IPR003593">
    <property type="entry name" value="AAA+_ATPase"/>
</dbReference>
<dbReference type="InterPro" id="IPR031166">
    <property type="entry name" value="G_ENGA"/>
</dbReference>
<dbReference type="InterPro" id="IPR006073">
    <property type="entry name" value="GTP-bd"/>
</dbReference>
<dbReference type="InterPro" id="IPR016484">
    <property type="entry name" value="GTPase_Der"/>
</dbReference>
<dbReference type="InterPro" id="IPR032859">
    <property type="entry name" value="KH_dom-like"/>
</dbReference>
<dbReference type="InterPro" id="IPR015946">
    <property type="entry name" value="KH_dom-like_a/b"/>
</dbReference>
<dbReference type="InterPro" id="IPR027417">
    <property type="entry name" value="P-loop_NTPase"/>
</dbReference>
<dbReference type="InterPro" id="IPR005225">
    <property type="entry name" value="Small_GTP-bd"/>
</dbReference>
<dbReference type="NCBIfam" id="TIGR03594">
    <property type="entry name" value="GTPase_EngA"/>
    <property type="match status" value="1"/>
</dbReference>
<dbReference type="NCBIfam" id="TIGR00231">
    <property type="entry name" value="small_GTP"/>
    <property type="match status" value="2"/>
</dbReference>
<dbReference type="PANTHER" id="PTHR43834">
    <property type="entry name" value="GTPASE DER"/>
    <property type="match status" value="1"/>
</dbReference>
<dbReference type="PANTHER" id="PTHR43834:SF6">
    <property type="entry name" value="GTPASE DER"/>
    <property type="match status" value="1"/>
</dbReference>
<dbReference type="Pfam" id="PF14714">
    <property type="entry name" value="KH_dom-like"/>
    <property type="match status" value="1"/>
</dbReference>
<dbReference type="Pfam" id="PF01926">
    <property type="entry name" value="MMR_HSR1"/>
    <property type="match status" value="2"/>
</dbReference>
<dbReference type="PIRSF" id="PIRSF006485">
    <property type="entry name" value="GTP-binding_EngA"/>
    <property type="match status" value="1"/>
</dbReference>
<dbReference type="PRINTS" id="PR00326">
    <property type="entry name" value="GTP1OBG"/>
</dbReference>
<dbReference type="SMART" id="SM00382">
    <property type="entry name" value="AAA"/>
    <property type="match status" value="2"/>
</dbReference>
<dbReference type="SUPFAM" id="SSF52540">
    <property type="entry name" value="P-loop containing nucleoside triphosphate hydrolases"/>
    <property type="match status" value="2"/>
</dbReference>
<dbReference type="PROSITE" id="PS51712">
    <property type="entry name" value="G_ENGA"/>
    <property type="match status" value="2"/>
</dbReference>
<evidence type="ECO:0000255" key="1">
    <source>
        <dbReference type="HAMAP-Rule" id="MF_00195"/>
    </source>
</evidence>
<name>DER_VIBCM</name>
<feature type="chain" id="PRO_1000124381" description="GTPase Der">
    <location>
        <begin position="1"/>
        <end position="494"/>
    </location>
</feature>
<feature type="domain" description="EngA-type G 1">
    <location>
        <begin position="3"/>
        <end position="166"/>
    </location>
</feature>
<feature type="domain" description="EngA-type G 2">
    <location>
        <begin position="206"/>
        <end position="379"/>
    </location>
</feature>
<feature type="domain" description="KH-like" evidence="1">
    <location>
        <begin position="380"/>
        <end position="464"/>
    </location>
</feature>
<feature type="binding site" evidence="1">
    <location>
        <begin position="9"/>
        <end position="16"/>
    </location>
    <ligand>
        <name>GTP</name>
        <dbReference type="ChEBI" id="CHEBI:37565"/>
        <label>1</label>
    </ligand>
</feature>
<feature type="binding site" evidence="1">
    <location>
        <begin position="56"/>
        <end position="60"/>
    </location>
    <ligand>
        <name>GTP</name>
        <dbReference type="ChEBI" id="CHEBI:37565"/>
        <label>1</label>
    </ligand>
</feature>
<feature type="binding site" evidence="1">
    <location>
        <begin position="118"/>
        <end position="121"/>
    </location>
    <ligand>
        <name>GTP</name>
        <dbReference type="ChEBI" id="CHEBI:37565"/>
        <label>1</label>
    </ligand>
</feature>
<feature type="binding site" evidence="1">
    <location>
        <begin position="212"/>
        <end position="219"/>
    </location>
    <ligand>
        <name>GTP</name>
        <dbReference type="ChEBI" id="CHEBI:37565"/>
        <label>2</label>
    </ligand>
</feature>
<feature type="binding site" evidence="1">
    <location>
        <begin position="259"/>
        <end position="263"/>
    </location>
    <ligand>
        <name>GTP</name>
        <dbReference type="ChEBI" id="CHEBI:37565"/>
        <label>2</label>
    </ligand>
</feature>
<feature type="binding site" evidence="1">
    <location>
        <begin position="324"/>
        <end position="327"/>
    </location>
    <ligand>
        <name>GTP</name>
        <dbReference type="ChEBI" id="CHEBI:37565"/>
        <label>2</label>
    </ligand>
</feature>
<reference key="1">
    <citation type="journal article" date="2008" name="PLoS ONE">
        <title>A recalibrated molecular clock and independent origins for the cholera pandemic clones.</title>
        <authorList>
            <person name="Feng L."/>
            <person name="Reeves P.R."/>
            <person name="Lan R."/>
            <person name="Ren Y."/>
            <person name="Gao C."/>
            <person name="Zhou Z."/>
            <person name="Ren Y."/>
            <person name="Cheng J."/>
            <person name="Wang W."/>
            <person name="Wang J."/>
            <person name="Qian W."/>
            <person name="Li D."/>
            <person name="Wang L."/>
        </authorList>
    </citation>
    <scope>NUCLEOTIDE SEQUENCE [LARGE SCALE GENOMIC DNA]</scope>
    <source>
        <strain>M66-2</strain>
    </source>
</reference>
<gene>
    <name evidence="1" type="primary">der</name>
    <name type="synonym">engA</name>
    <name type="ordered locus">VCM66_0721</name>
</gene>